<accession>B9WAT8</accession>
<keyword id="KW-0472">Membrane</keyword>
<keyword id="KW-0496">Mitochondrion</keyword>
<keyword id="KW-0809">Transit peptide</keyword>
<keyword id="KW-0812">Transmembrane</keyword>
<keyword id="KW-1133">Transmembrane helix</keyword>
<protein>
    <recommendedName>
        <fullName>Altered inheritance of mitochondria protein 36, mitochondrial</fullName>
    </recommendedName>
    <alternativeName>
        <fullName>Found in mitochondria protein 39</fullName>
    </alternativeName>
</protein>
<dbReference type="EMBL" id="FM992689">
    <property type="protein sequence ID" value="CAX43508.1"/>
    <property type="molecule type" value="Genomic_DNA"/>
</dbReference>
<dbReference type="RefSeq" id="XP_002418208.1">
    <property type="nucleotide sequence ID" value="XM_002418163.1"/>
</dbReference>
<dbReference type="GeneID" id="8045771"/>
<dbReference type="KEGG" id="cdu:CD36_17300"/>
<dbReference type="CGD" id="CAL0000169183">
    <property type="gene designation" value="Cd36_17300"/>
</dbReference>
<dbReference type="eggNOG" id="ENOG502SAUM">
    <property type="taxonomic scope" value="Eukaryota"/>
</dbReference>
<dbReference type="HOGENOM" id="CLU_997550_0_0_1"/>
<dbReference type="OrthoDB" id="4081130at2759"/>
<dbReference type="Proteomes" id="UP000002605">
    <property type="component" value="Chromosome 2"/>
</dbReference>
<dbReference type="GO" id="GO:0031966">
    <property type="term" value="C:mitochondrial membrane"/>
    <property type="evidence" value="ECO:0007669"/>
    <property type="project" value="UniProtKB-SubCell"/>
</dbReference>
<dbReference type="Gene3D" id="3.40.50.300">
    <property type="entry name" value="P-loop containing nucleotide triphosphate hydrolases"/>
    <property type="match status" value="1"/>
</dbReference>
<dbReference type="InterPro" id="IPR027417">
    <property type="entry name" value="P-loop_NTPase"/>
</dbReference>
<feature type="transit peptide" description="Mitochondrion" evidence="2">
    <location>
        <begin position="1"/>
        <end position="27"/>
    </location>
</feature>
<feature type="chain" id="PRO_0000399721" description="Altered inheritance of mitochondria protein 36, mitochondrial">
    <location>
        <begin position="28"/>
        <end position="293"/>
    </location>
</feature>
<feature type="transmembrane region" description="Helical" evidence="2">
    <location>
        <begin position="57"/>
        <end position="76"/>
    </location>
</feature>
<evidence type="ECO:0000250" key="1"/>
<evidence type="ECO:0000255" key="2"/>
<evidence type="ECO:0000305" key="3"/>
<reference key="1">
    <citation type="journal article" date="2009" name="Genome Res.">
        <title>Comparative genomics of the fungal pathogens Candida dubliniensis and Candida albicans.</title>
        <authorList>
            <person name="Jackson A.P."/>
            <person name="Gamble J.A."/>
            <person name="Yeomans T."/>
            <person name="Moran G.P."/>
            <person name="Saunders D."/>
            <person name="Harris D."/>
            <person name="Aslett M."/>
            <person name="Barrell J.F."/>
            <person name="Butler G."/>
            <person name="Citiulo F."/>
            <person name="Coleman D.C."/>
            <person name="de Groot P.W.J."/>
            <person name="Goodwin T.J."/>
            <person name="Quail M.A."/>
            <person name="McQuillan J."/>
            <person name="Munro C.A."/>
            <person name="Pain A."/>
            <person name="Poulter R.T."/>
            <person name="Rajandream M.A."/>
            <person name="Renauld H."/>
            <person name="Spiering M.J."/>
            <person name="Tivey A."/>
            <person name="Gow N.A.R."/>
            <person name="Barrell B."/>
            <person name="Sullivan D.J."/>
            <person name="Berriman M."/>
        </authorList>
    </citation>
    <scope>NUCLEOTIDE SEQUENCE [LARGE SCALE GENOMIC DNA]</scope>
    <source>
        <strain>CD36 / ATCC MYA-646 / CBS 7987 / NCPF 3949 / NRRL Y-17841</strain>
    </source>
</reference>
<organism>
    <name type="scientific">Candida dubliniensis (strain CD36 / ATCC MYA-646 / CBS 7987 / NCPF 3949 / NRRL Y-17841)</name>
    <name type="common">Yeast</name>
    <dbReference type="NCBI Taxonomy" id="573826"/>
    <lineage>
        <taxon>Eukaryota</taxon>
        <taxon>Fungi</taxon>
        <taxon>Dikarya</taxon>
        <taxon>Ascomycota</taxon>
        <taxon>Saccharomycotina</taxon>
        <taxon>Pichiomycetes</taxon>
        <taxon>Debaryomycetaceae</taxon>
        <taxon>Candida/Lodderomyces clade</taxon>
        <taxon>Candida</taxon>
    </lineage>
</organism>
<sequence>MFTRLAPRLQPQLLSTKRVLTTRYPTLVRTPIFHQTPIQIIKRNYVIVHKERKKEPVIRYLFYMLVASWVAIYFVANRVDKKKPPKQSFTEREFQSYEEETGLKRRNKLISHHMNSKYKFYVIPYVHDEEELNRVANLLQHKDENATVKIIDPAQLIEEQKKDEGMKYHYLLEDLDEQGKPYPPGLITAVIKQEIYKILNTREGTFDTNFLIKNYPQTTNEAIKFENDISDIQKCLILHYDMLNELPKNKTDEEQRAIKNVDGYFSSVGKSKTLVEKFDPMDKEFEDIILEDI</sequence>
<comment type="subcellular location">
    <subcellularLocation>
        <location evidence="1">Mitochondrion membrane</location>
        <topology evidence="1">Single-pass membrane protein</topology>
    </subcellularLocation>
</comment>
<comment type="similarity">
    <text evidence="3">Belongs to the AIM36 family.</text>
</comment>
<gene>
    <name type="primary">AIM36</name>
    <name type="synonym">FMP39</name>
    <name type="ORF">CD36_17300</name>
</gene>
<proteinExistence type="inferred from homology"/>
<name>AIM36_CANDC</name>